<proteinExistence type="inferred from homology"/>
<name>RLMC_SHIF8</name>
<accession>Q0T8K2</accession>
<comment type="function">
    <text evidence="1">Catalyzes the formation of 5-methyl-uridine at position 747 (m5U747) in 23S rRNA.</text>
</comment>
<comment type="catalytic activity">
    <reaction evidence="1">
        <text>uridine(747) in 23S rRNA + S-adenosyl-L-methionine = 5-methyluridine(747) in 23S rRNA + S-adenosyl-L-homocysteine + H(+)</text>
        <dbReference type="Rhea" id="RHEA:42628"/>
        <dbReference type="Rhea" id="RHEA-COMP:10154"/>
        <dbReference type="Rhea" id="RHEA-COMP:10155"/>
        <dbReference type="ChEBI" id="CHEBI:15378"/>
        <dbReference type="ChEBI" id="CHEBI:57856"/>
        <dbReference type="ChEBI" id="CHEBI:59789"/>
        <dbReference type="ChEBI" id="CHEBI:65315"/>
        <dbReference type="ChEBI" id="CHEBI:74447"/>
        <dbReference type="EC" id="2.1.1.189"/>
    </reaction>
</comment>
<comment type="similarity">
    <text evidence="1">Belongs to the class I-like SAM-binding methyltransferase superfamily. RNA M5U methyltransferase family. RlmC subfamily.</text>
</comment>
<feature type="chain" id="PRO_0000282020" description="23S rRNA (uracil(747)-C(5))-methyltransferase RlmC">
    <location>
        <begin position="1"/>
        <end position="375"/>
    </location>
</feature>
<feature type="active site" description="Nucleophile" evidence="1">
    <location>
        <position position="334"/>
    </location>
</feature>
<feature type="binding site" evidence="1">
    <location>
        <position position="3"/>
    </location>
    <ligand>
        <name>[4Fe-4S] cluster</name>
        <dbReference type="ChEBI" id="CHEBI:49883"/>
    </ligand>
</feature>
<feature type="binding site" evidence="1">
    <location>
        <position position="11"/>
    </location>
    <ligand>
        <name>[4Fe-4S] cluster</name>
        <dbReference type="ChEBI" id="CHEBI:49883"/>
    </ligand>
</feature>
<feature type="binding site" evidence="1">
    <location>
        <position position="14"/>
    </location>
    <ligand>
        <name>[4Fe-4S] cluster</name>
        <dbReference type="ChEBI" id="CHEBI:49883"/>
    </ligand>
</feature>
<feature type="binding site" evidence="1">
    <location>
        <position position="87"/>
    </location>
    <ligand>
        <name>[4Fe-4S] cluster</name>
        <dbReference type="ChEBI" id="CHEBI:49883"/>
    </ligand>
</feature>
<feature type="binding site" evidence="1">
    <location>
        <position position="212"/>
    </location>
    <ligand>
        <name>S-adenosyl-L-methionine</name>
        <dbReference type="ChEBI" id="CHEBI:59789"/>
    </ligand>
</feature>
<feature type="binding site" evidence="1">
    <location>
        <position position="241"/>
    </location>
    <ligand>
        <name>S-adenosyl-L-methionine</name>
        <dbReference type="ChEBI" id="CHEBI:59789"/>
    </ligand>
</feature>
<feature type="binding site" evidence="1">
    <location>
        <position position="262"/>
    </location>
    <ligand>
        <name>S-adenosyl-L-methionine</name>
        <dbReference type="ChEBI" id="CHEBI:59789"/>
    </ligand>
</feature>
<feature type="binding site" evidence="1">
    <location>
        <position position="307"/>
    </location>
    <ligand>
        <name>S-adenosyl-L-methionine</name>
        <dbReference type="ChEBI" id="CHEBI:59789"/>
    </ligand>
</feature>
<evidence type="ECO:0000255" key="1">
    <source>
        <dbReference type="HAMAP-Rule" id="MF_01012"/>
    </source>
</evidence>
<reference key="1">
    <citation type="journal article" date="2006" name="BMC Genomics">
        <title>Complete genome sequence of Shigella flexneri 5b and comparison with Shigella flexneri 2a.</title>
        <authorList>
            <person name="Nie H."/>
            <person name="Yang F."/>
            <person name="Zhang X."/>
            <person name="Yang J."/>
            <person name="Chen L."/>
            <person name="Wang J."/>
            <person name="Xiong Z."/>
            <person name="Peng J."/>
            <person name="Sun L."/>
            <person name="Dong J."/>
            <person name="Xue Y."/>
            <person name="Xu X."/>
            <person name="Chen S."/>
            <person name="Yao Z."/>
            <person name="Shen Y."/>
            <person name="Jin Q."/>
        </authorList>
    </citation>
    <scope>NUCLEOTIDE SEQUENCE [LARGE SCALE GENOMIC DNA]</scope>
    <source>
        <strain>8401</strain>
    </source>
</reference>
<protein>
    <recommendedName>
        <fullName evidence="1">23S rRNA (uracil(747)-C(5))-methyltransferase RlmC</fullName>
        <ecNumber evidence="1">2.1.1.189</ecNumber>
    </recommendedName>
    <alternativeName>
        <fullName evidence="1">23S rRNA(m5U747)-methyltransferase</fullName>
    </alternativeName>
</protein>
<organism>
    <name type="scientific">Shigella flexneri serotype 5b (strain 8401)</name>
    <dbReference type="NCBI Taxonomy" id="373384"/>
    <lineage>
        <taxon>Bacteria</taxon>
        <taxon>Pseudomonadati</taxon>
        <taxon>Pseudomonadota</taxon>
        <taxon>Gammaproteobacteria</taxon>
        <taxon>Enterobacterales</taxon>
        <taxon>Enterobacteriaceae</taxon>
        <taxon>Shigella</taxon>
    </lineage>
</organism>
<dbReference type="EC" id="2.1.1.189" evidence="1"/>
<dbReference type="EMBL" id="CP000266">
    <property type="protein sequence ID" value="ABF03071.1"/>
    <property type="molecule type" value="Genomic_DNA"/>
</dbReference>
<dbReference type="RefSeq" id="WP_001149748.1">
    <property type="nucleotide sequence ID" value="NC_008258.1"/>
</dbReference>
<dbReference type="SMR" id="Q0T8K2"/>
<dbReference type="KEGG" id="sfv:SFV_0844"/>
<dbReference type="HOGENOM" id="CLU_014689_0_0_6"/>
<dbReference type="Proteomes" id="UP000000659">
    <property type="component" value="Chromosome"/>
</dbReference>
<dbReference type="GO" id="GO:0051539">
    <property type="term" value="F:4 iron, 4 sulfur cluster binding"/>
    <property type="evidence" value="ECO:0007669"/>
    <property type="project" value="UniProtKB-KW"/>
</dbReference>
<dbReference type="GO" id="GO:0005506">
    <property type="term" value="F:iron ion binding"/>
    <property type="evidence" value="ECO:0007669"/>
    <property type="project" value="UniProtKB-UniRule"/>
</dbReference>
<dbReference type="GO" id="GO:0070041">
    <property type="term" value="F:rRNA (uridine-C5-)-methyltransferase activity"/>
    <property type="evidence" value="ECO:0007669"/>
    <property type="project" value="UniProtKB-UniRule"/>
</dbReference>
<dbReference type="GO" id="GO:0070475">
    <property type="term" value="P:rRNA base methylation"/>
    <property type="evidence" value="ECO:0007669"/>
    <property type="project" value="TreeGrafter"/>
</dbReference>
<dbReference type="CDD" id="cd02440">
    <property type="entry name" value="AdoMet_MTases"/>
    <property type="match status" value="1"/>
</dbReference>
<dbReference type="FunFam" id="2.40.50.1070:FF:000002">
    <property type="entry name" value="23S rRNA (uracil(747)-C(5))-methyltransferase RlmC"/>
    <property type="match status" value="1"/>
</dbReference>
<dbReference type="FunFam" id="3.40.50.150:FF:000049">
    <property type="entry name" value="23S rRNA (uracil(747)-C(5))-methyltransferase RlmC"/>
    <property type="match status" value="1"/>
</dbReference>
<dbReference type="Gene3D" id="2.40.50.1070">
    <property type="match status" value="1"/>
</dbReference>
<dbReference type="Gene3D" id="3.40.50.150">
    <property type="entry name" value="Vaccinia Virus protein VP39"/>
    <property type="match status" value="1"/>
</dbReference>
<dbReference type="HAMAP" id="MF_01012">
    <property type="entry name" value="23SrRNA_methyltr_RlmC"/>
    <property type="match status" value="1"/>
</dbReference>
<dbReference type="InterPro" id="IPR011825">
    <property type="entry name" value="23SrRNA_MeTrfase_RlmC"/>
</dbReference>
<dbReference type="InterPro" id="IPR030390">
    <property type="entry name" value="MeTrfase_TrmA_AS"/>
</dbReference>
<dbReference type="InterPro" id="IPR030391">
    <property type="entry name" value="MeTrfase_TrmA_CS"/>
</dbReference>
<dbReference type="InterPro" id="IPR029063">
    <property type="entry name" value="SAM-dependent_MTases_sf"/>
</dbReference>
<dbReference type="InterPro" id="IPR010280">
    <property type="entry name" value="U5_MeTrfase_fam"/>
</dbReference>
<dbReference type="NCBIfam" id="TIGR02085">
    <property type="entry name" value="meth_trns_rumB"/>
    <property type="match status" value="1"/>
</dbReference>
<dbReference type="PANTHER" id="PTHR11061">
    <property type="entry name" value="RNA M5U METHYLTRANSFERASE"/>
    <property type="match status" value="1"/>
</dbReference>
<dbReference type="PANTHER" id="PTHR11061:SF30">
    <property type="entry name" value="TRNA (URACIL(54)-C(5))-METHYLTRANSFERASE"/>
    <property type="match status" value="1"/>
</dbReference>
<dbReference type="Pfam" id="PF05958">
    <property type="entry name" value="tRNA_U5-meth_tr"/>
    <property type="match status" value="1"/>
</dbReference>
<dbReference type="SUPFAM" id="SSF53335">
    <property type="entry name" value="S-adenosyl-L-methionine-dependent methyltransferases"/>
    <property type="match status" value="1"/>
</dbReference>
<dbReference type="PROSITE" id="PS51687">
    <property type="entry name" value="SAM_MT_RNA_M5U"/>
    <property type="match status" value="1"/>
</dbReference>
<dbReference type="PROSITE" id="PS01230">
    <property type="entry name" value="TRMA_1"/>
    <property type="match status" value="1"/>
</dbReference>
<dbReference type="PROSITE" id="PS01231">
    <property type="entry name" value="TRMA_2"/>
    <property type="match status" value="1"/>
</dbReference>
<gene>
    <name evidence="1" type="primary">rlmC</name>
    <name type="synonym">rumB</name>
    <name type="ordered locus">SFV_0844</name>
</gene>
<sequence>MQCALYDAGRCRSCQWITQPIPEQLSAKTADLKNLLADFPVEEWCAPVSGPEQGFRNKAKMVVSGSVEKTLLGMLHRDGTPEDLCDCPLYPASFAPVFAALKPFIARAGLTPYNVARKRGELKYILLTESQSDGGMMLRFVLRSDTKLAQLRKALPWLHEQLPQLKVITVNIQPVHMAIMEGETEIYLTEQQALAERFNDVPLWIRPQSFFQTNPAVASQLYATARDWVRQLPVKHMWDLFCGVGGFGLHCATPDMQLTGIEIAPEAIACAKQSAAELGLTRLQFQALDSTQFATAQGEVPELVLVNPPRRGIGKPLCDYLSTMAPRFIIYSSCNAQTMAKDIRELPGYRIERVQLFDMFPHTAHYEVLTLLVKQ</sequence>
<keyword id="KW-0004">4Fe-4S</keyword>
<keyword id="KW-0408">Iron</keyword>
<keyword id="KW-0411">Iron-sulfur</keyword>
<keyword id="KW-0479">Metal-binding</keyword>
<keyword id="KW-0489">Methyltransferase</keyword>
<keyword id="KW-0698">rRNA processing</keyword>
<keyword id="KW-0949">S-adenosyl-L-methionine</keyword>
<keyword id="KW-0808">Transferase</keyword>